<accession>Q55E44</accession>
<accession>Q95PH3</accession>
<proteinExistence type="inferred from homology"/>
<gene>
    <name type="primary">dhkE</name>
    <name type="ORF">DDB_G0269204</name>
</gene>
<reference key="1">
    <citation type="book" date="2001" name="Histidine kinases in signal transduction">
        <title>The histidine kinases of Dictyostelium.</title>
        <editorList>
            <person name="Inouye M."/>
            <person name="Dutta R."/>
        </editorList>
        <authorList>
            <person name="Anjard C."/>
            <person name="Loomis W.F."/>
        </authorList>
    </citation>
    <scope>NUCLEOTIDE SEQUENCE [GENOMIC DNA]</scope>
    <source>
        <strain>AX4</strain>
    </source>
</reference>
<reference key="2">
    <citation type="journal article" date="2005" name="Nature">
        <title>The genome of the social amoeba Dictyostelium discoideum.</title>
        <authorList>
            <person name="Eichinger L."/>
            <person name="Pachebat J.A."/>
            <person name="Gloeckner G."/>
            <person name="Rajandream M.A."/>
            <person name="Sucgang R."/>
            <person name="Berriman M."/>
            <person name="Song J."/>
            <person name="Olsen R."/>
            <person name="Szafranski K."/>
            <person name="Xu Q."/>
            <person name="Tunggal B."/>
            <person name="Kummerfeld S."/>
            <person name="Madera M."/>
            <person name="Konfortov B.A."/>
            <person name="Rivero F."/>
            <person name="Bankier A.T."/>
            <person name="Lehmann R."/>
            <person name="Hamlin N."/>
            <person name="Davies R."/>
            <person name="Gaudet P."/>
            <person name="Fey P."/>
            <person name="Pilcher K."/>
            <person name="Chen G."/>
            <person name="Saunders D."/>
            <person name="Sodergren E.J."/>
            <person name="Davis P."/>
            <person name="Kerhornou A."/>
            <person name="Nie X."/>
            <person name="Hall N."/>
            <person name="Anjard C."/>
            <person name="Hemphill L."/>
            <person name="Bason N."/>
            <person name="Farbrother P."/>
            <person name="Desany B."/>
            <person name="Just E."/>
            <person name="Morio T."/>
            <person name="Rost R."/>
            <person name="Churcher C.M."/>
            <person name="Cooper J."/>
            <person name="Haydock S."/>
            <person name="van Driessche N."/>
            <person name="Cronin A."/>
            <person name="Goodhead I."/>
            <person name="Muzny D.M."/>
            <person name="Mourier T."/>
            <person name="Pain A."/>
            <person name="Lu M."/>
            <person name="Harper D."/>
            <person name="Lindsay R."/>
            <person name="Hauser H."/>
            <person name="James K.D."/>
            <person name="Quiles M."/>
            <person name="Madan Babu M."/>
            <person name="Saito T."/>
            <person name="Buchrieser C."/>
            <person name="Wardroper A."/>
            <person name="Felder M."/>
            <person name="Thangavelu M."/>
            <person name="Johnson D."/>
            <person name="Knights A."/>
            <person name="Loulseged H."/>
            <person name="Mungall K.L."/>
            <person name="Oliver K."/>
            <person name="Price C."/>
            <person name="Quail M.A."/>
            <person name="Urushihara H."/>
            <person name="Hernandez J."/>
            <person name="Rabbinowitsch E."/>
            <person name="Steffen D."/>
            <person name="Sanders M."/>
            <person name="Ma J."/>
            <person name="Kohara Y."/>
            <person name="Sharp S."/>
            <person name="Simmonds M.N."/>
            <person name="Spiegler S."/>
            <person name="Tivey A."/>
            <person name="Sugano S."/>
            <person name="White B."/>
            <person name="Walker D."/>
            <person name="Woodward J.R."/>
            <person name="Winckler T."/>
            <person name="Tanaka Y."/>
            <person name="Shaulsky G."/>
            <person name="Schleicher M."/>
            <person name="Weinstock G.M."/>
            <person name="Rosenthal A."/>
            <person name="Cox E.C."/>
            <person name="Chisholm R.L."/>
            <person name="Gibbs R.A."/>
            <person name="Loomis W.F."/>
            <person name="Platzer M."/>
            <person name="Kay R.R."/>
            <person name="Williams J.G."/>
            <person name="Dear P.H."/>
            <person name="Noegel A.A."/>
            <person name="Barrell B.G."/>
            <person name="Kuspa A."/>
        </authorList>
    </citation>
    <scope>NUCLEOTIDE SEQUENCE [LARGE SCALE GENOMIC DNA]</scope>
    <source>
        <strain>AX4</strain>
    </source>
</reference>
<keyword id="KW-0067">ATP-binding</keyword>
<keyword id="KW-0418">Kinase</keyword>
<keyword id="KW-0472">Membrane</keyword>
<keyword id="KW-0547">Nucleotide-binding</keyword>
<keyword id="KW-0597">Phosphoprotein</keyword>
<keyword id="KW-1185">Reference proteome</keyword>
<keyword id="KW-0807">Transducer</keyword>
<keyword id="KW-0808">Transferase</keyword>
<keyword id="KW-0812">Transmembrane</keyword>
<keyword id="KW-1133">Transmembrane helix</keyword>
<keyword id="KW-0902">Two-component regulatory system</keyword>
<feature type="chain" id="PRO_0000328271" description="Hybrid signal transduction histidine kinase E">
    <location>
        <begin position="1"/>
        <end position="1699"/>
    </location>
</feature>
<feature type="transmembrane region" description="Helical" evidence="2">
    <location>
        <begin position="142"/>
        <end position="162"/>
    </location>
</feature>
<feature type="transmembrane region" description="Helical" evidence="2">
    <location>
        <begin position="164"/>
        <end position="184"/>
    </location>
</feature>
<feature type="transmembrane region" description="Helical" evidence="2">
    <location>
        <begin position="191"/>
        <end position="211"/>
    </location>
</feature>
<feature type="transmembrane region" description="Helical" evidence="2">
    <location>
        <begin position="238"/>
        <end position="258"/>
    </location>
</feature>
<feature type="transmembrane region" description="Helical" evidence="2">
    <location>
        <begin position="262"/>
        <end position="282"/>
    </location>
</feature>
<feature type="transmembrane region" description="Helical" evidence="2">
    <location>
        <begin position="295"/>
        <end position="315"/>
    </location>
</feature>
<feature type="domain" description="Histidine kinase" evidence="3">
    <location>
        <begin position="678"/>
        <end position="950"/>
    </location>
</feature>
<feature type="domain" description="Response regulatory" evidence="4">
    <location>
        <begin position="1575"/>
        <end position="1695"/>
    </location>
</feature>
<feature type="region of interest" description="Disordered" evidence="5">
    <location>
        <begin position="1"/>
        <end position="32"/>
    </location>
</feature>
<feature type="region of interest" description="Disordered" evidence="5">
    <location>
        <begin position="58"/>
        <end position="97"/>
    </location>
</feature>
<feature type="region of interest" description="Disordered" evidence="5">
    <location>
        <begin position="412"/>
        <end position="439"/>
    </location>
</feature>
<feature type="region of interest" description="Disordered" evidence="5">
    <location>
        <begin position="542"/>
        <end position="593"/>
    </location>
</feature>
<feature type="region of interest" description="Disordered" evidence="5">
    <location>
        <begin position="819"/>
        <end position="866"/>
    </location>
</feature>
<feature type="region of interest" description="Disordered" evidence="5">
    <location>
        <begin position="1018"/>
        <end position="1054"/>
    </location>
</feature>
<feature type="region of interest" description="Disordered" evidence="5">
    <location>
        <begin position="1186"/>
        <end position="1239"/>
    </location>
</feature>
<feature type="region of interest" description="Disordered" evidence="5">
    <location>
        <begin position="1252"/>
        <end position="1294"/>
    </location>
</feature>
<feature type="region of interest" description="Disordered" evidence="5">
    <location>
        <begin position="1351"/>
        <end position="1406"/>
    </location>
</feature>
<feature type="compositionally biased region" description="Low complexity" evidence="5">
    <location>
        <begin position="7"/>
        <end position="32"/>
    </location>
</feature>
<feature type="compositionally biased region" description="Polar residues" evidence="5">
    <location>
        <begin position="412"/>
        <end position="432"/>
    </location>
</feature>
<feature type="compositionally biased region" description="Low complexity" evidence="5">
    <location>
        <begin position="544"/>
        <end position="593"/>
    </location>
</feature>
<feature type="compositionally biased region" description="Polar residues" evidence="5">
    <location>
        <begin position="1198"/>
        <end position="1212"/>
    </location>
</feature>
<feature type="compositionally biased region" description="Low complexity" evidence="5">
    <location>
        <begin position="1219"/>
        <end position="1239"/>
    </location>
</feature>
<feature type="compositionally biased region" description="Polar residues" evidence="5">
    <location>
        <begin position="1271"/>
        <end position="1282"/>
    </location>
</feature>
<feature type="compositionally biased region" description="Low complexity" evidence="5">
    <location>
        <begin position="1283"/>
        <end position="1294"/>
    </location>
</feature>
<feature type="compositionally biased region" description="Low complexity" evidence="5">
    <location>
        <begin position="1355"/>
        <end position="1392"/>
    </location>
</feature>
<feature type="modified residue" description="Phosphohistidine; by autocatalysis" evidence="3">
    <location>
        <position position="681"/>
    </location>
</feature>
<feature type="modified residue" description="4-aspartylphosphate" evidence="4">
    <location>
        <position position="1625"/>
    </location>
</feature>
<feature type="sequence conflict" description="In Ref. 1; AAK54094." evidence="6" ref="1">
    <original>A</original>
    <variation>T</variation>
    <location>
        <position position="665"/>
    </location>
</feature>
<feature type="sequence conflict" description="In Ref. 1; AAK54094." evidence="6" ref="1">
    <original>T</original>
    <variation>P</variation>
    <location>
        <position position="803"/>
    </location>
</feature>
<feature type="sequence conflict" description="In Ref. 1; AAK54094." evidence="6" ref="1">
    <original>S</original>
    <variation>T</variation>
    <location>
        <position position="813"/>
    </location>
</feature>
<feature type="sequence conflict" description="In Ref. 1; AAK54094." evidence="6" ref="1">
    <original>Q</original>
    <variation>P</variation>
    <location>
        <position position="817"/>
    </location>
</feature>
<dbReference type="EC" id="2.7.13.3"/>
<dbReference type="EMBL" id="AF362375">
    <property type="protein sequence ID" value="AAK54094.2"/>
    <property type="molecule type" value="Genomic_DNA"/>
</dbReference>
<dbReference type="EMBL" id="AAFI02000005">
    <property type="protein sequence ID" value="EAL71952.1"/>
    <property type="molecule type" value="Genomic_DNA"/>
</dbReference>
<dbReference type="RefSeq" id="XP_645937.1">
    <property type="nucleotide sequence ID" value="XM_640845.1"/>
</dbReference>
<dbReference type="SMR" id="Q55E44"/>
<dbReference type="GlyGen" id="Q55E44">
    <property type="glycosylation" value="1 site"/>
</dbReference>
<dbReference type="PaxDb" id="44689-DDB0191265"/>
<dbReference type="EnsemblProtists" id="EAL71952">
    <property type="protein sequence ID" value="EAL71952"/>
    <property type="gene ID" value="DDB_G0269204"/>
</dbReference>
<dbReference type="GeneID" id="8616881"/>
<dbReference type="KEGG" id="ddi:DDB_G0269204"/>
<dbReference type="dictyBase" id="DDB_G0269204">
    <property type="gene designation" value="dhkE"/>
</dbReference>
<dbReference type="VEuPathDB" id="AmoebaDB:DDB_G0269204"/>
<dbReference type="eggNOG" id="KOG0519">
    <property type="taxonomic scope" value="Eukaryota"/>
</dbReference>
<dbReference type="HOGENOM" id="CLU_240946_0_0_1"/>
<dbReference type="InParanoid" id="Q55E44"/>
<dbReference type="OMA" id="IYRRCCI"/>
<dbReference type="PRO" id="PR:Q55E44"/>
<dbReference type="Proteomes" id="UP000002195">
    <property type="component" value="Chromosome 1"/>
</dbReference>
<dbReference type="GO" id="GO:0016020">
    <property type="term" value="C:membrane"/>
    <property type="evidence" value="ECO:0007669"/>
    <property type="project" value="UniProtKB-SubCell"/>
</dbReference>
<dbReference type="GO" id="GO:0005524">
    <property type="term" value="F:ATP binding"/>
    <property type="evidence" value="ECO:0007669"/>
    <property type="project" value="UniProtKB-KW"/>
</dbReference>
<dbReference type="GO" id="GO:0000155">
    <property type="term" value="F:phosphorelay sensor kinase activity"/>
    <property type="evidence" value="ECO:0007669"/>
    <property type="project" value="InterPro"/>
</dbReference>
<dbReference type="GO" id="GO:0099139">
    <property type="term" value="P:cheating during chimeric sorocarp development"/>
    <property type="evidence" value="ECO:0000315"/>
    <property type="project" value="dictyBase"/>
</dbReference>
<dbReference type="CDD" id="cd00082">
    <property type="entry name" value="HisKA"/>
    <property type="match status" value="1"/>
</dbReference>
<dbReference type="CDD" id="cd17546">
    <property type="entry name" value="REC_hyHK_CKI1_RcsC-like"/>
    <property type="match status" value="1"/>
</dbReference>
<dbReference type="Gene3D" id="1.10.287.130">
    <property type="match status" value="1"/>
</dbReference>
<dbReference type="Gene3D" id="3.40.50.2300">
    <property type="match status" value="1"/>
</dbReference>
<dbReference type="Gene3D" id="3.30.565.10">
    <property type="entry name" value="Histidine kinase-like ATPase, C-terminal domain"/>
    <property type="match status" value="1"/>
</dbReference>
<dbReference type="Gene3D" id="3.30.450.20">
    <property type="entry name" value="PAS domain"/>
    <property type="match status" value="1"/>
</dbReference>
<dbReference type="InterPro" id="IPR011006">
    <property type="entry name" value="CheY-like_superfamily"/>
</dbReference>
<dbReference type="InterPro" id="IPR036890">
    <property type="entry name" value="HATPase_C_sf"/>
</dbReference>
<dbReference type="InterPro" id="IPR005467">
    <property type="entry name" value="His_kinase_dom"/>
</dbReference>
<dbReference type="InterPro" id="IPR003661">
    <property type="entry name" value="HisK_dim/P_dom"/>
</dbReference>
<dbReference type="InterPro" id="IPR036097">
    <property type="entry name" value="HisK_dim/P_sf"/>
</dbReference>
<dbReference type="InterPro" id="IPR000014">
    <property type="entry name" value="PAS"/>
</dbReference>
<dbReference type="InterPro" id="IPR035965">
    <property type="entry name" value="PAS-like_dom_sf"/>
</dbReference>
<dbReference type="InterPro" id="IPR004358">
    <property type="entry name" value="Sig_transdc_His_kin-like_C"/>
</dbReference>
<dbReference type="InterPro" id="IPR001789">
    <property type="entry name" value="Sig_transdc_resp-reg_receiver"/>
</dbReference>
<dbReference type="NCBIfam" id="TIGR00229">
    <property type="entry name" value="sensory_box"/>
    <property type="match status" value="1"/>
</dbReference>
<dbReference type="PANTHER" id="PTHR45339">
    <property type="entry name" value="HYBRID SIGNAL TRANSDUCTION HISTIDINE KINASE J"/>
    <property type="match status" value="1"/>
</dbReference>
<dbReference type="PANTHER" id="PTHR45339:SF1">
    <property type="entry name" value="HYBRID SIGNAL TRANSDUCTION HISTIDINE KINASE J"/>
    <property type="match status" value="1"/>
</dbReference>
<dbReference type="Pfam" id="PF02518">
    <property type="entry name" value="HATPase_c"/>
    <property type="match status" value="1"/>
</dbReference>
<dbReference type="Pfam" id="PF00512">
    <property type="entry name" value="HisKA"/>
    <property type="match status" value="1"/>
</dbReference>
<dbReference type="Pfam" id="PF13188">
    <property type="entry name" value="PAS_8"/>
    <property type="match status" value="1"/>
</dbReference>
<dbReference type="Pfam" id="PF00072">
    <property type="entry name" value="Response_reg"/>
    <property type="match status" value="1"/>
</dbReference>
<dbReference type="PRINTS" id="PR00344">
    <property type="entry name" value="BCTRLSENSOR"/>
</dbReference>
<dbReference type="SMART" id="SM00387">
    <property type="entry name" value="HATPase_c"/>
    <property type="match status" value="1"/>
</dbReference>
<dbReference type="SMART" id="SM00388">
    <property type="entry name" value="HisKA"/>
    <property type="match status" value="1"/>
</dbReference>
<dbReference type="SMART" id="SM00091">
    <property type="entry name" value="PAS"/>
    <property type="match status" value="1"/>
</dbReference>
<dbReference type="SMART" id="SM00448">
    <property type="entry name" value="REC"/>
    <property type="match status" value="1"/>
</dbReference>
<dbReference type="SUPFAM" id="SSF55874">
    <property type="entry name" value="ATPase domain of HSP90 chaperone/DNA topoisomerase II/histidine kinase"/>
    <property type="match status" value="1"/>
</dbReference>
<dbReference type="SUPFAM" id="SSF52172">
    <property type="entry name" value="CheY-like"/>
    <property type="match status" value="1"/>
</dbReference>
<dbReference type="SUPFAM" id="SSF47384">
    <property type="entry name" value="Homodimeric domain of signal transducing histidine kinase"/>
    <property type="match status" value="1"/>
</dbReference>
<dbReference type="SUPFAM" id="SSF55785">
    <property type="entry name" value="PYP-like sensor domain (PAS domain)"/>
    <property type="match status" value="1"/>
</dbReference>
<dbReference type="PROSITE" id="PS50109">
    <property type="entry name" value="HIS_KIN"/>
    <property type="match status" value="1"/>
</dbReference>
<dbReference type="PROSITE" id="PS50110">
    <property type="entry name" value="RESPONSE_REGULATORY"/>
    <property type="match status" value="1"/>
</dbReference>
<organism>
    <name type="scientific">Dictyostelium discoideum</name>
    <name type="common">Social amoeba</name>
    <dbReference type="NCBI Taxonomy" id="44689"/>
    <lineage>
        <taxon>Eukaryota</taxon>
        <taxon>Amoebozoa</taxon>
        <taxon>Evosea</taxon>
        <taxon>Eumycetozoa</taxon>
        <taxon>Dictyostelia</taxon>
        <taxon>Dictyosteliales</taxon>
        <taxon>Dictyosteliaceae</taxon>
        <taxon>Dictyostelium</taxon>
    </lineage>
</organism>
<sequence length="1699" mass="191750">MDKLKINNNLSPPSSPSSSTTTPNLSSTNLENNLNSNINNNINNFNLNNSTNTFNNSNNIIINNNNNNNNNNNNNNNNNNNNSNNNNNNINNNNPNVNSPNEVILNNNFLKQNKKGFFKRNKKMIEIFLPPKFKSPIYRRCCILLGECGVYVFIYMFFLIFLRSFYPIFICGIVSMIVLYIVSTKTTKYKLVALIYIFVQSILNFTFFLQITNNFNNNTVNINNTDDYSNEVIEFSKLNFLFIMNLILSLISIQIFFPKFTFSITLTCSLNIFNIIIHLISIYSLNTKKLIVFQNLIVPITVSFLLSFYSYILSIDNQEIEAKEKRFRNIFDTSSEALVIHKNGLIIDVNSTFEKIFQIKQSDLINGTIWEYLPELESFFQNTNGNSKYTNQSLQQQLQQQQQQQQQLYNTITNGGNNKQTSTTSANSTPRYNNYNNNNINSNNLNNLNVFNNLNNLNNLNNNNNNHHIHKVSRSNTGLSDSSSIFDDSDSVDFFSMKNINKCPIVLDTVGITPCGSEFCAQVKIERKKDMLIGSGTSSFNLLNNNNNNNNNNNNNNNNNNNNNNNNNNSNNNNNNNSNNNNNNNNINNNISNNIINNNNNNNNSGIITNLSQQSNNLSTTNLNTSSKIINHKHKNSKQDFDVMSIVDISAKKKLMIADQALRRAEELNQAKINFLTTVSHEVRTPINGILASVEILDGSQLDVTQRDFLSCIKQSADYLLDLITDILDFSKIEAGKFELDRVEFNLITMLEESINIVYRTAQERGIEVLTFIDPDVPIILIGDPYRVKQCVLNFLSNAIKFTHKGQVMVKVSIVDQINNNNNNNNNNNNNNNNNNNNNNNNNNNNNNKIVGFSNNNNNNNNNNNNGNNGILNFKLSFSVEDSGVGIKEEVLDCLFTPFHQLGGSPRKYLGTGLGLSISKKLTTLMGGEIGVKSVYGVGSAFSFTSILSTTSTTPISLQSLGSSLSIALNNLSPTIPKISGFIYDDNIHTSNSLFNFLKLMNINLKIINPIINNNNNNNNNNNNNNNNNNNNNNNNNNNNNDNNNNNNNNNDNNIDQQQLKFEFENEIDKYCNVEDDNNNVILIITNQLSNDNLNYFKDKINQLNNSIYWFVLCDNGLKAIDPFYYGIVKKPNNLLNLVDTVFKVYNCQLPQDLYQLLTNGSKDDYKNYLKYRNVVIKKITEDNEKKQQQQQQQQQQMGDTLSSTKSPQYTNLPPLDISSSSNGSLNKSNRSNLLRKSSSVYSDHVAITRGMVQVNRSPRPSTPPPLFNLKGNNSNPNSTELNSTNSVNGNPNNDSTLETIEPLNISETVGDLCSSGSVINNSNFIINNNFLTSSPYGSCLTPNSGTTSPSIPININNNDNNNNNNNNNNNNNNNNNNNNNNNNNNNNNNNNSFKKLEPDNFSPPPSILINDNNIIPALNVTTPITISTSTSSSSSLLINNEINNKSTTSKRPSFIPPLDIQSKKLIINTADENHKNNCIIDFEQIFGQDGKQQPQQQQQQQQQQQQQQQQQQQQQQQQQQQQQQQQQQQQQQQKLNIGNQQQQQILSSPRLQSQLLSNCDSLGNTPPVTPHRRNALIVDDTELNRKVLAQLLRRMDWSVSFAENGIEALKEITSERCFDIIFMDCQMPILDGFETTKLLRLRELENNWKPLNIVALSADSSSSFGQVCFDCGMNGYLGKPITLITLKDTLLKWGGYRD</sequence>
<name>DHKE_DICDI</name>
<comment type="function">
    <text evidence="1">May act in a signal transduction pathway. This protein undergoes an ATP-dependent autophosphorylation at a conserved histidine residue in the kinase core, and a phosphoryl group is then transferred to a conserved aspartate residue in the receiver domain (By similarity).</text>
</comment>
<comment type="catalytic activity">
    <reaction>
        <text>ATP + protein L-histidine = ADP + protein N-phospho-L-histidine.</text>
        <dbReference type="EC" id="2.7.13.3"/>
    </reaction>
</comment>
<comment type="subcellular location">
    <subcellularLocation>
        <location evidence="6">Membrane</location>
        <topology evidence="6">Multi-pass membrane protein</topology>
    </subcellularLocation>
</comment>
<protein>
    <recommendedName>
        <fullName>Hybrid signal transduction histidine kinase E</fullName>
        <ecNumber>2.7.13.3</ecNumber>
    </recommendedName>
</protein>
<evidence type="ECO:0000250" key="1"/>
<evidence type="ECO:0000255" key="2"/>
<evidence type="ECO:0000255" key="3">
    <source>
        <dbReference type="PROSITE-ProRule" id="PRU00107"/>
    </source>
</evidence>
<evidence type="ECO:0000255" key="4">
    <source>
        <dbReference type="PROSITE-ProRule" id="PRU00169"/>
    </source>
</evidence>
<evidence type="ECO:0000256" key="5">
    <source>
        <dbReference type="SAM" id="MobiDB-lite"/>
    </source>
</evidence>
<evidence type="ECO:0000305" key="6"/>